<comment type="function">
    <text evidence="4">MFS-type transporter; part of the gene cluster that mediates the biosynthesis of GKK1032, fungal natural products containing a macrocyclic para-cyclophane connected to a decahydrofluorene ring system that show potent antitumor activities.</text>
</comment>
<comment type="subcellular location">
    <subcellularLocation>
        <location evidence="1">Membrane</location>
        <topology evidence="1">Multi-pass membrane protein</topology>
    </subcellularLocation>
</comment>
<comment type="similarity">
    <text evidence="6">Belongs to the major facilitator superfamily.</text>
</comment>
<reference key="1">
    <citation type="journal article" date="2021" name="J. Am. Chem. Soc.">
        <title>Biosynthesis of para-cyclophane-containing hirsutellone family of fungal natural products.</title>
        <authorList>
            <person name="Ohashi M."/>
            <person name="Kakule T.B."/>
            <person name="Tang M.C."/>
            <person name="Jamieson C.S."/>
            <person name="Liu M."/>
            <person name="Zhao Y.L."/>
            <person name="Houk K.N."/>
            <person name="Tang Y."/>
        </authorList>
    </citation>
    <scope>NUCLEOTIDE SEQUENCE [GENOMIC DNA]</scope>
    <scope>FUNCTION</scope>
    <scope>PATHWAY</scope>
    <source>
        <strain>DSM 1997</strain>
    </source>
</reference>
<dbReference type="EMBL" id="MW690135">
    <property type="protein sequence ID" value="QXF14608.1"/>
    <property type="molecule type" value="Genomic_DNA"/>
</dbReference>
<dbReference type="SMR" id="A0A8F4NW86"/>
<dbReference type="GO" id="GO:0005886">
    <property type="term" value="C:plasma membrane"/>
    <property type="evidence" value="ECO:0007669"/>
    <property type="project" value="TreeGrafter"/>
</dbReference>
<dbReference type="GO" id="GO:0022857">
    <property type="term" value="F:transmembrane transporter activity"/>
    <property type="evidence" value="ECO:0007669"/>
    <property type="project" value="InterPro"/>
</dbReference>
<dbReference type="CDD" id="cd17502">
    <property type="entry name" value="MFS_Azr1_MDR_like"/>
    <property type="match status" value="1"/>
</dbReference>
<dbReference type="Gene3D" id="1.20.1250.20">
    <property type="entry name" value="MFS general substrate transporter like domains"/>
    <property type="match status" value="1"/>
</dbReference>
<dbReference type="Gene3D" id="1.20.1720.10">
    <property type="entry name" value="Multidrug resistance protein D"/>
    <property type="match status" value="1"/>
</dbReference>
<dbReference type="InterPro" id="IPR011701">
    <property type="entry name" value="MFS"/>
</dbReference>
<dbReference type="InterPro" id="IPR020846">
    <property type="entry name" value="MFS_dom"/>
</dbReference>
<dbReference type="InterPro" id="IPR036259">
    <property type="entry name" value="MFS_trans_sf"/>
</dbReference>
<dbReference type="InterPro" id="IPR005829">
    <property type="entry name" value="Sugar_transporter_CS"/>
</dbReference>
<dbReference type="PANTHER" id="PTHR23501">
    <property type="entry name" value="MAJOR FACILITATOR SUPERFAMILY"/>
    <property type="match status" value="1"/>
</dbReference>
<dbReference type="PANTHER" id="PTHR23501:SF187">
    <property type="entry name" value="MAJOR FACILITATOR SUPERFAMILY (MFS) PROFILE DOMAIN-CONTAINING PROTEIN"/>
    <property type="match status" value="1"/>
</dbReference>
<dbReference type="Pfam" id="PF07690">
    <property type="entry name" value="MFS_1"/>
    <property type="match status" value="1"/>
</dbReference>
<dbReference type="PRINTS" id="PR01036">
    <property type="entry name" value="TCRTETB"/>
</dbReference>
<dbReference type="SUPFAM" id="SSF103473">
    <property type="entry name" value="MFS general substrate transporter"/>
    <property type="match status" value="1"/>
</dbReference>
<dbReference type="PROSITE" id="PS50850">
    <property type="entry name" value="MFS"/>
    <property type="match status" value="1"/>
</dbReference>
<dbReference type="PROSITE" id="PS00216">
    <property type="entry name" value="SUGAR_TRANSPORT_1"/>
    <property type="match status" value="1"/>
</dbReference>
<evidence type="ECO:0000255" key="1"/>
<evidence type="ECO:0000255" key="2">
    <source>
        <dbReference type="PROSITE-ProRule" id="PRU00498"/>
    </source>
</evidence>
<evidence type="ECO:0000256" key="3">
    <source>
        <dbReference type="SAM" id="MobiDB-lite"/>
    </source>
</evidence>
<evidence type="ECO:0000269" key="4">
    <source>
    </source>
</evidence>
<evidence type="ECO:0000303" key="5">
    <source>
    </source>
</evidence>
<evidence type="ECO:0000305" key="6"/>
<name>GKAD_PENCI</name>
<organism>
    <name type="scientific">Penicillium citrinum</name>
    <dbReference type="NCBI Taxonomy" id="5077"/>
    <lineage>
        <taxon>Eukaryota</taxon>
        <taxon>Fungi</taxon>
        <taxon>Dikarya</taxon>
        <taxon>Ascomycota</taxon>
        <taxon>Pezizomycotina</taxon>
        <taxon>Eurotiomycetes</taxon>
        <taxon>Eurotiomycetidae</taxon>
        <taxon>Eurotiales</taxon>
        <taxon>Aspergillaceae</taxon>
        <taxon>Penicillium</taxon>
    </lineage>
</organism>
<accession>A0A8F4NW86</accession>
<keyword id="KW-0325">Glycoprotein</keyword>
<keyword id="KW-0472">Membrane</keyword>
<keyword id="KW-0812">Transmembrane</keyword>
<keyword id="KW-1133">Transmembrane helix</keyword>
<keyword id="KW-0813">Transport</keyword>
<keyword id="KW-0843">Virulence</keyword>
<sequence length="584" mass="63523">MAVDTETTTTTIPVTDSDRIDDQNNLTSNAIPHASEKTVPDSPASEQNEVSDESEDKPSKTKKSFGFYAIIVALALTSLLTSLEATITSTALPTITSELGGASLYVWVVNGYYLTQTAFQPFVGQMADIYGRRWPMICSAAMFTIGSGVAGGSKNIQTLIAGRLLQGIGSGGILVLTEIIICDLLPLRERGKYLGMIVSLVGIGAALGPLFGGLIVQYSSWPWVFYLNVPIGGVACLMLFFFLRVRSDKTPNYMQRLRRFDWIGNVLFVMSMVSILIALSWAGTEYPWSSFRVVVPLVLGFVGSAAFVVYEGSSFCVNPTMPLHIFSNRTSGTAFAVTFLHTLSSVSVMYFLPVYFQAVLNASPSRSGVQLLPTILFMIPGAIAGGTLLSKFGRYRPLQHGGLAFMIIGFGLLTLLDADSNTGEWVGYQLLGALGTGLALPVLLPAVQAPLTEEDTALCTATWSFMRTYGFIWGATIATAVFNNRFDVLAPRITDTTIGSQLTNGRAYELATKVFMNSIKDPVTQREVKSVYVDALNVVWYVSLAFAGLGFLLVFLEKEITLRKELDTKYAMEEKKKKPENSEA</sequence>
<protein>
    <recommendedName>
        <fullName evidence="5">MFS-type transporter gkaD</fullName>
    </recommendedName>
    <alternativeName>
        <fullName evidence="5">GKK1032 biosynthesis cluster protein D</fullName>
    </alternativeName>
</protein>
<feature type="chain" id="PRO_0000458428" description="MFS-type transporter gkaD">
    <location>
        <begin position="1"/>
        <end position="584"/>
    </location>
</feature>
<feature type="transmembrane region" description="Helical" evidence="1">
    <location>
        <begin position="65"/>
        <end position="85"/>
    </location>
</feature>
<feature type="transmembrane region" description="Helical" evidence="1">
    <location>
        <begin position="99"/>
        <end position="119"/>
    </location>
</feature>
<feature type="transmembrane region" description="Helical" evidence="1">
    <location>
        <begin position="134"/>
        <end position="154"/>
    </location>
</feature>
<feature type="transmembrane region" description="Helical" evidence="1">
    <location>
        <begin position="167"/>
        <end position="187"/>
    </location>
</feature>
<feature type="transmembrane region" description="Helical" evidence="1">
    <location>
        <begin position="196"/>
        <end position="216"/>
    </location>
</feature>
<feature type="transmembrane region" description="Helical" evidence="1">
    <location>
        <begin position="223"/>
        <end position="243"/>
    </location>
</feature>
<feature type="transmembrane region" description="Helical" evidence="1">
    <location>
        <begin position="262"/>
        <end position="282"/>
    </location>
</feature>
<feature type="transmembrane region" description="Helical" evidence="1">
    <location>
        <begin position="293"/>
        <end position="313"/>
    </location>
</feature>
<feature type="transmembrane region" description="Helical" evidence="1">
    <location>
        <begin position="334"/>
        <end position="354"/>
    </location>
</feature>
<feature type="transmembrane region" description="Helical" evidence="1">
    <location>
        <begin position="369"/>
        <end position="389"/>
    </location>
</feature>
<feature type="transmembrane region" description="Helical" evidence="1">
    <location>
        <begin position="398"/>
        <end position="418"/>
    </location>
</feature>
<feature type="transmembrane region" description="Helical" evidence="1">
    <location>
        <begin position="425"/>
        <end position="445"/>
    </location>
</feature>
<feature type="transmembrane region" description="Helical" evidence="1">
    <location>
        <begin position="462"/>
        <end position="482"/>
    </location>
</feature>
<feature type="transmembrane region" description="Helical" evidence="1">
    <location>
        <begin position="536"/>
        <end position="556"/>
    </location>
</feature>
<feature type="region of interest" description="Disordered" evidence="3">
    <location>
        <begin position="1"/>
        <end position="60"/>
    </location>
</feature>
<feature type="compositionally biased region" description="Low complexity" evidence="3">
    <location>
        <begin position="1"/>
        <end position="11"/>
    </location>
</feature>
<feature type="glycosylation site" description="N-linked (GlcNAc...) asparagine" evidence="2">
    <location>
        <position position="25"/>
    </location>
</feature>
<feature type="glycosylation site" description="N-linked (GlcNAc...) asparagine" evidence="2">
    <location>
        <position position="328"/>
    </location>
</feature>
<gene>
    <name evidence="5" type="primary">gkaD</name>
</gene>
<proteinExistence type="inferred from homology"/>